<name>ADS32_ARATH</name>
<keyword id="KW-0150">Chloroplast</keyword>
<keyword id="KW-0275">Fatty acid biosynthesis</keyword>
<keyword id="KW-0276">Fatty acid metabolism</keyword>
<keyword id="KW-0408">Iron</keyword>
<keyword id="KW-0444">Lipid biosynthesis</keyword>
<keyword id="KW-0443">Lipid metabolism</keyword>
<keyword id="KW-0472">Membrane</keyword>
<keyword id="KW-0560">Oxidoreductase</keyword>
<keyword id="KW-0934">Plastid</keyword>
<keyword id="KW-1185">Reference proteome</keyword>
<keyword id="KW-0809">Transit peptide</keyword>
<keyword id="KW-0812">Transmembrane</keyword>
<keyword id="KW-1133">Transmembrane helix</keyword>
<evidence type="ECO:0000250" key="1">
    <source>
        <dbReference type="UniProtKB" id="O00767"/>
    </source>
</evidence>
<evidence type="ECO:0000255" key="2"/>
<evidence type="ECO:0000269" key="3">
    <source>
    </source>
</evidence>
<evidence type="ECO:0000303" key="4">
    <source>
    </source>
</evidence>
<evidence type="ECO:0000305" key="5"/>
<evidence type="ECO:0000312" key="6">
    <source>
        <dbReference type="Araport" id="AT3G15870"/>
    </source>
</evidence>
<evidence type="ECO:0000312" key="7">
    <source>
        <dbReference type="EMBL" id="BAB02317.1"/>
    </source>
</evidence>
<sequence length="361" mass="42343">MMSLSTTLKPLSHFSPFVKRHNPKTNNTLFTLDTHNFTNSFWSKRGGSVSHRKHTVVAVYEAPDHVESSWRRLLSEVVVVRTKRSFWERSWTSWDVSKLVIFVGTHLLSLLAPFYFSWEAFWVFPWLVFINGICITLSYHRNLSHRSFDLPKWLEYLFAYGGVLAFQGDPIEWVSNHRYHHKHCETQRDPHSPTQGFWFSHMAWIFDTSSILENCGGEENVDDLVRQPFYRFLQRTVLLHMMAYSFLFYFCGGMPLLVWGIGITIAVRLHLTFLVNSVCHIWGTRAWNTSDFSKNNWWVAILTLGEGWHNNHHAFEFSARHGLEWWQLDITWCLIRFLEAIGLATNVKLPTETQMKGKALV</sequence>
<proteinExistence type="evidence at transcript level"/>
<organism>
    <name type="scientific">Arabidopsis thaliana</name>
    <name type="common">Mouse-ear cress</name>
    <dbReference type="NCBI Taxonomy" id="3702"/>
    <lineage>
        <taxon>Eukaryota</taxon>
        <taxon>Viridiplantae</taxon>
        <taxon>Streptophyta</taxon>
        <taxon>Embryophyta</taxon>
        <taxon>Tracheophyta</taxon>
        <taxon>Spermatophyta</taxon>
        <taxon>Magnoliopsida</taxon>
        <taxon>eudicotyledons</taxon>
        <taxon>Gunneridae</taxon>
        <taxon>Pentapetalae</taxon>
        <taxon>rosids</taxon>
        <taxon>malvids</taxon>
        <taxon>Brassicales</taxon>
        <taxon>Brassicaceae</taxon>
        <taxon>Camelineae</taxon>
        <taxon>Arabidopsis</taxon>
    </lineage>
</organism>
<gene>
    <name evidence="4" type="primary">ADS3.2</name>
    <name evidence="6" type="ordered locus">At3g15870</name>
    <name evidence="7" type="ORF">MSJ11.26</name>
</gene>
<protein>
    <recommendedName>
        <fullName evidence="4">Probable lipid desaturase ADS3.2, chloroplastic</fullName>
        <ecNumber evidence="5">1.14.19.-</ecNumber>
    </recommendedName>
</protein>
<dbReference type="EC" id="1.14.19.-" evidence="5"/>
<dbReference type="EMBL" id="AY734685">
    <property type="protein sequence ID" value="AAW51921.1"/>
    <property type="status" value="ALT_SEQ"/>
    <property type="molecule type" value="Genomic_DNA"/>
</dbReference>
<dbReference type="EMBL" id="AB017071">
    <property type="protein sequence ID" value="BAB02317.1"/>
    <property type="status" value="ALT_SEQ"/>
    <property type="molecule type" value="Genomic_DNA"/>
</dbReference>
<dbReference type="EMBL" id="CP002686">
    <property type="protein sequence ID" value="AEE75739.1"/>
    <property type="molecule type" value="Genomic_DNA"/>
</dbReference>
<dbReference type="RefSeq" id="NP_188208.4">
    <property type="nucleotide sequence ID" value="NM_112457.6"/>
</dbReference>
<dbReference type="SMR" id="Q9LVZ3"/>
<dbReference type="FunCoup" id="Q9LVZ3">
    <property type="interactions" value="282"/>
</dbReference>
<dbReference type="STRING" id="3702.Q9LVZ3"/>
<dbReference type="iPTMnet" id="Q9LVZ3"/>
<dbReference type="PaxDb" id="3702-AT3G15870.1"/>
<dbReference type="EnsemblPlants" id="AT3G15870.1">
    <property type="protein sequence ID" value="AT3G15870.1"/>
    <property type="gene ID" value="AT3G15870"/>
</dbReference>
<dbReference type="GeneID" id="820830"/>
<dbReference type="Gramene" id="AT3G15870.1">
    <property type="protein sequence ID" value="AT3G15870.1"/>
    <property type="gene ID" value="AT3G15870"/>
</dbReference>
<dbReference type="KEGG" id="ath:AT3G15870"/>
<dbReference type="Araport" id="AT3G15870"/>
<dbReference type="TAIR" id="AT3G15870"/>
<dbReference type="eggNOG" id="KOG1600">
    <property type="taxonomic scope" value="Eukaryota"/>
</dbReference>
<dbReference type="HOGENOM" id="CLU_027359_1_0_1"/>
<dbReference type="InParanoid" id="Q9LVZ3"/>
<dbReference type="OMA" id="IGYHRLY"/>
<dbReference type="PhylomeDB" id="Q9LVZ3"/>
<dbReference type="BioCyc" id="ARA:AT3G15870-MONOMER"/>
<dbReference type="UniPathway" id="UPA00658"/>
<dbReference type="PRO" id="PR:Q9LVZ3"/>
<dbReference type="Proteomes" id="UP000006548">
    <property type="component" value="Chromosome 3"/>
</dbReference>
<dbReference type="ExpressionAtlas" id="Q9LVZ3">
    <property type="expression patterns" value="baseline and differential"/>
</dbReference>
<dbReference type="GO" id="GO:0031969">
    <property type="term" value="C:chloroplast membrane"/>
    <property type="evidence" value="ECO:0007669"/>
    <property type="project" value="UniProtKB-SubCell"/>
</dbReference>
<dbReference type="GO" id="GO:0016717">
    <property type="term" value="F:oxidoreductase activity, acting on paired donors, with oxidation of a pair of donors resulting in the reduction of molecular oxygen to two molecules of water"/>
    <property type="evidence" value="ECO:0007669"/>
    <property type="project" value="InterPro"/>
</dbReference>
<dbReference type="GO" id="GO:0006636">
    <property type="term" value="P:unsaturated fatty acid biosynthetic process"/>
    <property type="evidence" value="ECO:0007669"/>
    <property type="project" value="UniProtKB-UniPathway"/>
</dbReference>
<dbReference type="CDD" id="cd03505">
    <property type="entry name" value="Delta9-FADS-like"/>
    <property type="match status" value="1"/>
</dbReference>
<dbReference type="InterPro" id="IPR015876">
    <property type="entry name" value="Acyl-CoA_DS"/>
</dbReference>
<dbReference type="InterPro" id="IPR005804">
    <property type="entry name" value="FA_desaturase_dom"/>
</dbReference>
<dbReference type="PANTHER" id="PTHR11351">
    <property type="entry name" value="ACYL-COA DESATURASE"/>
    <property type="match status" value="1"/>
</dbReference>
<dbReference type="PANTHER" id="PTHR11351:SF87">
    <property type="entry name" value="LIPID DESATURASE ADS3.2, CHLOROPLASTIC-RELATED"/>
    <property type="match status" value="1"/>
</dbReference>
<dbReference type="Pfam" id="PF00487">
    <property type="entry name" value="FA_desaturase"/>
    <property type="match status" value="1"/>
</dbReference>
<dbReference type="PRINTS" id="PR00075">
    <property type="entry name" value="FACDDSATRASE"/>
</dbReference>
<comment type="cofactor">
    <cofactor evidence="1">
        <name>Fe(2+)</name>
        <dbReference type="ChEBI" id="CHEBI:29033"/>
    </cofactor>
</comment>
<comment type="pathway">
    <text evidence="5">Lipid metabolism; polyunsaturated fatty acid biosynthesis.</text>
</comment>
<comment type="subcellular location">
    <subcellularLocation>
        <location evidence="5">Plastid</location>
        <location evidence="5">Chloroplast membrane</location>
        <topology evidence="5">Multi-pass membrane protein</topology>
    </subcellularLocation>
</comment>
<comment type="domain">
    <text evidence="1">The histidine box domains are involved in binding the catalytic metal ions.</text>
</comment>
<comment type="disruption phenotype">
    <text evidence="3">No visible phenotype and wild-type levels of both Hexadeca 7,10,13-trienoic acid (16:3(7Z,10Z,13Z)) and leaf chlorophyll content.</text>
</comment>
<comment type="miscellaneous">
    <text evidence="3">ADS3.2 does not contribute to the FAD5 phenotype.</text>
</comment>
<comment type="similarity">
    <text evidence="5">Belongs to the fatty acid desaturase type 1 family.</text>
</comment>
<comment type="sequence caution" evidence="5">
    <conflict type="erroneous gene model prediction">
        <sequence resource="EMBL-CDS" id="AAW51921"/>
    </conflict>
</comment>
<comment type="sequence caution" evidence="5">
    <conflict type="erroneous gene model prediction">
        <sequence resource="EMBL-CDS" id="BAB02317"/>
    </conflict>
</comment>
<accession>Q9LVZ3</accession>
<accession>Q5IGR4</accession>
<feature type="transit peptide" description="Chloroplast" evidence="2">
    <location>
        <begin position="1"/>
        <end position="57"/>
    </location>
</feature>
<feature type="chain" id="PRO_0000007145" description="Probable lipid desaturase ADS3.2, chloroplastic">
    <location>
        <begin position="58"/>
        <end position="361"/>
    </location>
</feature>
<feature type="transmembrane region" description="Helical" evidence="2">
    <location>
        <begin position="99"/>
        <end position="118"/>
    </location>
</feature>
<feature type="transmembrane region" description="Helical" evidence="2">
    <location>
        <begin position="122"/>
        <end position="139"/>
    </location>
</feature>
<feature type="transmembrane region" description="Helical" evidence="2">
    <location>
        <begin position="246"/>
        <end position="266"/>
    </location>
</feature>
<feature type="short sequence motif" description="Histidine box-1" evidence="5">
    <location>
        <begin position="140"/>
        <end position="145"/>
    </location>
</feature>
<feature type="short sequence motif" description="Histidine box-2" evidence="5">
    <location>
        <begin position="177"/>
        <end position="181"/>
    </location>
</feature>
<feature type="short sequence motif" description="Histidine box-3" evidence="5">
    <location>
        <begin position="309"/>
        <end position="313"/>
    </location>
</feature>
<reference key="1">
    <citation type="journal article" date="2004" name="Plant Physiol.">
        <title>Identification of the Arabidopsis palmitoyl-monogalactosyldiacylglycerol Delta7-desaturase gene FAD5, and effects of plastidial retargeting of Arabidopsis desaturases on the fad5 mutant phenotype.</title>
        <authorList>
            <person name="Heilmann I."/>
            <person name="Mekhedov S."/>
            <person name="King B."/>
            <person name="Browse J."/>
            <person name="Shanklin J."/>
        </authorList>
    </citation>
    <scope>NUCLEOTIDE SEQUENCE [GENOMIC DNA]</scope>
    <scope>DISRUPTION PHENOTYPE</scope>
</reference>
<reference key="2">
    <citation type="journal article" date="2000" name="DNA Res.">
        <title>Structural analysis of Arabidopsis thaliana chromosome 3. I. Sequence features of the regions of 4,504,864 bp covered by sixty P1 and TAC clones.</title>
        <authorList>
            <person name="Sato S."/>
            <person name="Nakamura Y."/>
            <person name="Kaneko T."/>
            <person name="Katoh T."/>
            <person name="Asamizu E."/>
            <person name="Tabata S."/>
        </authorList>
    </citation>
    <scope>NUCLEOTIDE SEQUENCE [LARGE SCALE GENOMIC DNA]</scope>
    <source>
        <strain>cv. Columbia</strain>
    </source>
</reference>
<reference key="3">
    <citation type="journal article" date="2017" name="Plant J.">
        <title>Araport11: a complete reannotation of the Arabidopsis thaliana reference genome.</title>
        <authorList>
            <person name="Cheng C.Y."/>
            <person name="Krishnakumar V."/>
            <person name="Chan A.P."/>
            <person name="Thibaud-Nissen F."/>
            <person name="Schobel S."/>
            <person name="Town C.D."/>
        </authorList>
    </citation>
    <scope>GENOME REANNOTATION</scope>
    <source>
        <strain>cv. Columbia</strain>
    </source>
</reference>